<evidence type="ECO:0000255" key="1">
    <source>
        <dbReference type="HAMAP-Rule" id="MF_00366"/>
    </source>
</evidence>
<name>RPOZ_JANSC</name>
<sequence>MARVTVEDCVDKVPNRFELVMLASHRAREIAAGDPLTIDRDNDKNPVVSLREIADETQSADDLRERLIESHQTQIEVDEPEEDAMALLQGVEQDRPAQDDMSEEQMLRALMEAQGQK</sequence>
<dbReference type="EC" id="2.7.7.6" evidence="1"/>
<dbReference type="EMBL" id="CP000264">
    <property type="protein sequence ID" value="ABD53430.1"/>
    <property type="molecule type" value="Genomic_DNA"/>
</dbReference>
<dbReference type="RefSeq" id="WP_011453639.1">
    <property type="nucleotide sequence ID" value="NC_007802.1"/>
</dbReference>
<dbReference type="SMR" id="Q28V32"/>
<dbReference type="STRING" id="290400.Jann_0513"/>
<dbReference type="KEGG" id="jan:Jann_0513"/>
<dbReference type="eggNOG" id="COG1758">
    <property type="taxonomic scope" value="Bacteria"/>
</dbReference>
<dbReference type="HOGENOM" id="CLU_125406_2_0_5"/>
<dbReference type="OrthoDB" id="9796300at2"/>
<dbReference type="Proteomes" id="UP000008326">
    <property type="component" value="Chromosome"/>
</dbReference>
<dbReference type="GO" id="GO:0000428">
    <property type="term" value="C:DNA-directed RNA polymerase complex"/>
    <property type="evidence" value="ECO:0007669"/>
    <property type="project" value="UniProtKB-KW"/>
</dbReference>
<dbReference type="GO" id="GO:0003677">
    <property type="term" value="F:DNA binding"/>
    <property type="evidence" value="ECO:0007669"/>
    <property type="project" value="UniProtKB-UniRule"/>
</dbReference>
<dbReference type="GO" id="GO:0003899">
    <property type="term" value="F:DNA-directed RNA polymerase activity"/>
    <property type="evidence" value="ECO:0007669"/>
    <property type="project" value="UniProtKB-UniRule"/>
</dbReference>
<dbReference type="GO" id="GO:0006351">
    <property type="term" value="P:DNA-templated transcription"/>
    <property type="evidence" value="ECO:0007669"/>
    <property type="project" value="UniProtKB-UniRule"/>
</dbReference>
<dbReference type="Gene3D" id="3.90.940.10">
    <property type="match status" value="1"/>
</dbReference>
<dbReference type="HAMAP" id="MF_00366">
    <property type="entry name" value="RNApol_bact_RpoZ"/>
    <property type="match status" value="1"/>
</dbReference>
<dbReference type="InterPro" id="IPR003716">
    <property type="entry name" value="DNA-dir_RNA_pol_omega"/>
</dbReference>
<dbReference type="InterPro" id="IPR006110">
    <property type="entry name" value="Pol_omega/Rpo6/RPB6"/>
</dbReference>
<dbReference type="InterPro" id="IPR036161">
    <property type="entry name" value="RPB6/omega-like_sf"/>
</dbReference>
<dbReference type="NCBIfam" id="TIGR00690">
    <property type="entry name" value="rpoZ"/>
    <property type="match status" value="1"/>
</dbReference>
<dbReference type="PANTHER" id="PTHR34476">
    <property type="entry name" value="DNA-DIRECTED RNA POLYMERASE SUBUNIT OMEGA"/>
    <property type="match status" value="1"/>
</dbReference>
<dbReference type="PANTHER" id="PTHR34476:SF1">
    <property type="entry name" value="DNA-DIRECTED RNA POLYMERASE SUBUNIT OMEGA"/>
    <property type="match status" value="1"/>
</dbReference>
<dbReference type="Pfam" id="PF01192">
    <property type="entry name" value="RNA_pol_Rpb6"/>
    <property type="match status" value="1"/>
</dbReference>
<dbReference type="SMART" id="SM01409">
    <property type="entry name" value="RNA_pol_Rpb6"/>
    <property type="match status" value="1"/>
</dbReference>
<dbReference type="SUPFAM" id="SSF63562">
    <property type="entry name" value="RPB6/omega subunit-like"/>
    <property type="match status" value="1"/>
</dbReference>
<keyword id="KW-0240">DNA-directed RNA polymerase</keyword>
<keyword id="KW-0548">Nucleotidyltransferase</keyword>
<keyword id="KW-1185">Reference proteome</keyword>
<keyword id="KW-0804">Transcription</keyword>
<keyword id="KW-0808">Transferase</keyword>
<protein>
    <recommendedName>
        <fullName evidence="1">DNA-directed RNA polymerase subunit omega</fullName>
        <shortName evidence="1">RNAP omega subunit</shortName>
        <ecNumber evidence="1">2.7.7.6</ecNumber>
    </recommendedName>
    <alternativeName>
        <fullName evidence="1">RNA polymerase omega subunit</fullName>
    </alternativeName>
    <alternativeName>
        <fullName evidence="1">Transcriptase subunit omega</fullName>
    </alternativeName>
</protein>
<organism>
    <name type="scientific">Jannaschia sp. (strain CCS1)</name>
    <dbReference type="NCBI Taxonomy" id="290400"/>
    <lineage>
        <taxon>Bacteria</taxon>
        <taxon>Pseudomonadati</taxon>
        <taxon>Pseudomonadota</taxon>
        <taxon>Alphaproteobacteria</taxon>
        <taxon>Rhodobacterales</taxon>
        <taxon>Roseobacteraceae</taxon>
        <taxon>Jannaschia</taxon>
    </lineage>
</organism>
<feature type="chain" id="PRO_1000005943" description="DNA-directed RNA polymerase subunit omega">
    <location>
        <begin position="1"/>
        <end position="117"/>
    </location>
</feature>
<proteinExistence type="inferred from homology"/>
<comment type="function">
    <text evidence="1">Promotes RNA polymerase assembly. Latches the N- and C-terminal regions of the beta' subunit thereby facilitating its interaction with the beta and alpha subunits.</text>
</comment>
<comment type="catalytic activity">
    <reaction evidence="1">
        <text>RNA(n) + a ribonucleoside 5'-triphosphate = RNA(n+1) + diphosphate</text>
        <dbReference type="Rhea" id="RHEA:21248"/>
        <dbReference type="Rhea" id="RHEA-COMP:14527"/>
        <dbReference type="Rhea" id="RHEA-COMP:17342"/>
        <dbReference type="ChEBI" id="CHEBI:33019"/>
        <dbReference type="ChEBI" id="CHEBI:61557"/>
        <dbReference type="ChEBI" id="CHEBI:140395"/>
        <dbReference type="EC" id="2.7.7.6"/>
    </reaction>
</comment>
<comment type="subunit">
    <text evidence="1">The RNAP catalytic core consists of 2 alpha, 1 beta, 1 beta' and 1 omega subunit. When a sigma factor is associated with the core the holoenzyme is formed, which can initiate transcription.</text>
</comment>
<comment type="similarity">
    <text evidence="1">Belongs to the RNA polymerase subunit omega family.</text>
</comment>
<reference key="1">
    <citation type="submission" date="2006-02" db="EMBL/GenBank/DDBJ databases">
        <title>Complete sequence of chromosome of Jannaschia sp. CCS1.</title>
        <authorList>
            <consortium name="US DOE Joint Genome Institute"/>
            <person name="Copeland A."/>
            <person name="Lucas S."/>
            <person name="Lapidus A."/>
            <person name="Barry K."/>
            <person name="Detter J.C."/>
            <person name="Glavina del Rio T."/>
            <person name="Hammon N."/>
            <person name="Israni S."/>
            <person name="Pitluck S."/>
            <person name="Brettin T."/>
            <person name="Bruce D."/>
            <person name="Han C."/>
            <person name="Tapia R."/>
            <person name="Gilna P."/>
            <person name="Chertkov O."/>
            <person name="Saunders E."/>
            <person name="Schmutz J."/>
            <person name="Larimer F."/>
            <person name="Land M."/>
            <person name="Kyrpides N."/>
            <person name="Lykidis A."/>
            <person name="Moran M.A."/>
            <person name="Belas R."/>
            <person name="Ye W."/>
            <person name="Buchan A."/>
            <person name="Gonzalez J.M."/>
            <person name="Schell M.A."/>
            <person name="Richardson P."/>
        </authorList>
    </citation>
    <scope>NUCLEOTIDE SEQUENCE [LARGE SCALE GENOMIC DNA]</scope>
    <source>
        <strain>CCS1</strain>
    </source>
</reference>
<gene>
    <name evidence="1" type="primary">rpoZ</name>
    <name type="ordered locus">Jann_0513</name>
</gene>
<accession>Q28V32</accession>